<feature type="chain" id="PRO_0000439261" description="Protein HEAT-INDUCED TAS1 TARGET 3">
    <location>
        <begin position="1"/>
        <end position="126"/>
    </location>
</feature>
<accession>F4KIH4</accession>
<accession>A0A1P8B9V0</accession>
<sequence length="126" mass="14370">MDMNQLFMQSIANSRGLCHPDCEKANNEREDYDASQHAAMVAVNLISSARVILKLDAVYTEYSAQYLVDNAGKEDNQGEMDQQSSQLTLQNLLQYMDENVWNKKEDVQGEREQPLTVKDCLECAFK</sequence>
<proteinExistence type="evidence at transcript level"/>
<gene>
    <name evidence="3" type="primary">HTT3</name>
    <name evidence="5" type="ordered locus">At5g18065</name>
    <name evidence="4" type="ORF">MCM23</name>
</gene>
<protein>
    <recommendedName>
        <fullName evidence="3">Protein HEAT-INDUCED TAS1 TARGET 3</fullName>
    </recommendedName>
</protein>
<name>HTT3_ARATH</name>
<reference key="1">
    <citation type="journal article" date="1998" name="DNA Res.">
        <title>Structural analysis of Arabidopsis thaliana chromosome 5. VII. Sequence features of the regions of 1,013,767 bp covered by sixteen physically assigned P1 and TAC clones.</title>
        <authorList>
            <person name="Nakamura Y."/>
            <person name="Sato S."/>
            <person name="Asamizu E."/>
            <person name="Kaneko T."/>
            <person name="Kotani H."/>
            <person name="Miyajima N."/>
            <person name="Tabata S."/>
        </authorList>
    </citation>
    <scope>NUCLEOTIDE SEQUENCE [LARGE SCALE GENOMIC DNA]</scope>
    <source>
        <strain>cv. Columbia</strain>
    </source>
</reference>
<reference key="2">
    <citation type="journal article" date="2017" name="Plant J.">
        <title>Araport11: a complete reannotation of the Arabidopsis thaliana reference genome.</title>
        <authorList>
            <person name="Cheng C.Y."/>
            <person name="Krishnakumar V."/>
            <person name="Chan A.P."/>
            <person name="Thibaud-Nissen F."/>
            <person name="Schobel S."/>
            <person name="Town C.D."/>
        </authorList>
    </citation>
    <scope>GENOME REANNOTATION</scope>
    <source>
        <strain>cv. Columbia</strain>
    </source>
</reference>
<reference key="3">
    <citation type="journal article" date="2003" name="Science">
        <title>Empirical analysis of transcriptional activity in the Arabidopsis genome.</title>
        <authorList>
            <person name="Yamada K."/>
            <person name="Lim J."/>
            <person name="Dale J.M."/>
            <person name="Chen H."/>
            <person name="Shinn P."/>
            <person name="Palm C.J."/>
            <person name="Southwick A.M."/>
            <person name="Wu H.C."/>
            <person name="Kim C.J."/>
            <person name="Nguyen M."/>
            <person name="Pham P.K."/>
            <person name="Cheuk R.F."/>
            <person name="Karlin-Newmann G."/>
            <person name="Liu S.X."/>
            <person name="Lam B."/>
            <person name="Sakano H."/>
            <person name="Wu T."/>
            <person name="Yu G."/>
            <person name="Miranda M."/>
            <person name="Quach H.L."/>
            <person name="Tripp M."/>
            <person name="Chang C.H."/>
            <person name="Lee J.M."/>
            <person name="Toriumi M.J."/>
            <person name="Chan M.M."/>
            <person name="Tang C.C."/>
            <person name="Onodera C.S."/>
            <person name="Deng J.M."/>
            <person name="Akiyama K."/>
            <person name="Ansari Y."/>
            <person name="Arakawa T."/>
            <person name="Banh J."/>
            <person name="Banno F."/>
            <person name="Bowser L."/>
            <person name="Brooks S.Y."/>
            <person name="Carninci P."/>
            <person name="Chao Q."/>
            <person name="Choy N."/>
            <person name="Enju A."/>
            <person name="Goldsmith A.D."/>
            <person name="Gurjal M."/>
            <person name="Hansen N.F."/>
            <person name="Hayashizaki Y."/>
            <person name="Johnson-Hopson C."/>
            <person name="Hsuan V.W."/>
            <person name="Iida K."/>
            <person name="Karnes M."/>
            <person name="Khan S."/>
            <person name="Koesema E."/>
            <person name="Ishida J."/>
            <person name="Jiang P.X."/>
            <person name="Jones T."/>
            <person name="Kawai J."/>
            <person name="Kamiya A."/>
            <person name="Meyers C."/>
            <person name="Nakajima M."/>
            <person name="Narusaka M."/>
            <person name="Seki M."/>
            <person name="Sakurai T."/>
            <person name="Satou M."/>
            <person name="Tamse R."/>
            <person name="Vaysberg M."/>
            <person name="Wallender E.K."/>
            <person name="Wong C."/>
            <person name="Yamamura Y."/>
            <person name="Yuan S."/>
            <person name="Shinozaki K."/>
            <person name="Davis R.W."/>
            <person name="Theologis A."/>
            <person name="Ecker J.R."/>
        </authorList>
    </citation>
    <scope>NUCLEOTIDE SEQUENCE [LARGE SCALE MRNA]</scope>
    <source>
        <strain>cv. Columbia</strain>
    </source>
</reference>
<reference key="4">
    <citation type="journal article" date="2014" name="Plant Cell">
        <title>HEAT-INDUCED TAS1 TARGET1 Mediates Thermotolerance via HEAT STRESS TRANSCRIPTION FACTOR A1a-Directed Pathways in Arabidopsis.</title>
        <authorList>
            <person name="Li S."/>
            <person name="Liu J."/>
            <person name="Liu Z."/>
            <person name="Li X."/>
            <person name="Wu F."/>
            <person name="He Y."/>
        </authorList>
    </citation>
    <scope>INDUCTION BY HEAT SHOCK</scope>
    <scope>TISSUE SPECIFICITY</scope>
    <source>
        <strain>cv. Columbia</strain>
        <strain>cv. Wassilewskija</strain>
    </source>
</reference>
<organism>
    <name type="scientific">Arabidopsis thaliana</name>
    <name type="common">Mouse-ear cress</name>
    <dbReference type="NCBI Taxonomy" id="3702"/>
    <lineage>
        <taxon>Eukaryota</taxon>
        <taxon>Viridiplantae</taxon>
        <taxon>Streptophyta</taxon>
        <taxon>Embryophyta</taxon>
        <taxon>Tracheophyta</taxon>
        <taxon>Spermatophyta</taxon>
        <taxon>Magnoliopsida</taxon>
        <taxon>eudicotyledons</taxon>
        <taxon>Gunneridae</taxon>
        <taxon>Pentapetalae</taxon>
        <taxon>rosids</taxon>
        <taxon>malvids</taxon>
        <taxon>Brassicales</taxon>
        <taxon>Brassicaceae</taxon>
        <taxon>Camelineae</taxon>
        <taxon>Arabidopsis</taxon>
    </lineage>
</organism>
<keyword id="KW-0963">Cytoplasm</keyword>
<keyword id="KW-0539">Nucleus</keyword>
<keyword id="KW-1185">Reference proteome</keyword>
<comment type="function">
    <text evidence="1">Mediates both basal and acquired thermotolerance.</text>
</comment>
<comment type="subcellular location">
    <subcellularLocation>
        <location evidence="1">Cytoplasm</location>
    </subcellularLocation>
    <subcellularLocation>
        <location evidence="1">Nucleus</location>
    </subcellularLocation>
</comment>
<comment type="tissue specificity">
    <text evidence="2">Expressed in seedlings, leaves, stems, inflorescences and siliques.</text>
</comment>
<comment type="induction">
    <text evidence="1 2">Target of TAS1 (trans-acting siRNA precursor 1)-derived small interfering RNAs in response to temperature variations (By similarity). Highly up-regulated in seedlings exposed to heat shock (PubMed:24728648).</text>
</comment>
<comment type="similarity">
    <text evidence="4">Belongs to the heat induced plant HTT protein family.</text>
</comment>
<evidence type="ECO:0000250" key="1">
    <source>
        <dbReference type="UniProtKB" id="Q8LFW5"/>
    </source>
</evidence>
<evidence type="ECO:0000269" key="2">
    <source>
    </source>
</evidence>
<evidence type="ECO:0000303" key="3">
    <source>
    </source>
</evidence>
<evidence type="ECO:0000305" key="4"/>
<evidence type="ECO:0000312" key="5">
    <source>
        <dbReference type="Araport" id="AT5G18065"/>
    </source>
</evidence>
<dbReference type="EMBL" id="AB015473">
    <property type="status" value="NOT_ANNOTATED_CDS"/>
    <property type="molecule type" value="Genomic_DNA"/>
</dbReference>
<dbReference type="EMBL" id="CP002688">
    <property type="protein sequence ID" value="AED92502.1"/>
    <property type="molecule type" value="Genomic_DNA"/>
</dbReference>
<dbReference type="EMBL" id="CP002688">
    <property type="protein sequence ID" value="ANM68371.1"/>
    <property type="molecule type" value="Genomic_DNA"/>
</dbReference>
<dbReference type="EMBL" id="CP002688">
    <property type="protein sequence ID" value="ANM68372.1"/>
    <property type="molecule type" value="Genomic_DNA"/>
</dbReference>
<dbReference type="EMBL" id="AY045982">
    <property type="status" value="NOT_ANNOTATED_CDS"/>
    <property type="molecule type" value="mRNA"/>
</dbReference>
<dbReference type="RefSeq" id="NP_001330133.1">
    <property type="nucleotide sequence ID" value="NM_001343533.1"/>
</dbReference>
<dbReference type="RefSeq" id="NP_001330134.1">
    <property type="nucleotide sequence ID" value="NM_001343534.1"/>
</dbReference>
<dbReference type="RefSeq" id="NP_680172.2">
    <property type="nucleotide sequence ID" value="NM_147867.6"/>
</dbReference>
<dbReference type="FunCoup" id="F4KIH4">
    <property type="interactions" value="9"/>
</dbReference>
<dbReference type="STRING" id="3702.F4KIH4"/>
<dbReference type="PaxDb" id="3702-AT5G18065.1"/>
<dbReference type="EnsemblPlants" id="AT5G18065.1">
    <property type="protein sequence ID" value="AT5G18065.1"/>
    <property type="gene ID" value="AT5G18065"/>
</dbReference>
<dbReference type="EnsemblPlants" id="AT5G18065.2">
    <property type="protein sequence ID" value="AT5G18065.2"/>
    <property type="gene ID" value="AT5G18065"/>
</dbReference>
<dbReference type="EnsemblPlants" id="AT5G18065.3">
    <property type="protein sequence ID" value="AT5G18065.3"/>
    <property type="gene ID" value="AT5G18065"/>
</dbReference>
<dbReference type="GeneID" id="831535"/>
<dbReference type="Gramene" id="AT5G18065.1">
    <property type="protein sequence ID" value="AT5G18065.1"/>
    <property type="gene ID" value="AT5G18065"/>
</dbReference>
<dbReference type="Gramene" id="AT5G18065.2">
    <property type="protein sequence ID" value="AT5G18065.2"/>
    <property type="gene ID" value="AT5G18065"/>
</dbReference>
<dbReference type="Gramene" id="AT5G18065.3">
    <property type="protein sequence ID" value="AT5G18065.3"/>
    <property type="gene ID" value="AT5G18065"/>
</dbReference>
<dbReference type="KEGG" id="ath:AT5G18065"/>
<dbReference type="Araport" id="AT5G18065"/>
<dbReference type="TAIR" id="AT5G18065">
    <property type="gene designation" value="HTT3"/>
</dbReference>
<dbReference type="HOGENOM" id="CLU_1984629_0_0_1"/>
<dbReference type="InParanoid" id="F4KIH4"/>
<dbReference type="PRO" id="PR:F4KIH4"/>
<dbReference type="Proteomes" id="UP000006548">
    <property type="component" value="Chromosome 5"/>
</dbReference>
<dbReference type="ExpressionAtlas" id="F4KIH4">
    <property type="expression patterns" value="baseline and differential"/>
</dbReference>
<dbReference type="GO" id="GO:0005737">
    <property type="term" value="C:cytoplasm"/>
    <property type="evidence" value="ECO:0000250"/>
    <property type="project" value="UniProtKB"/>
</dbReference>
<dbReference type="GO" id="GO:0005634">
    <property type="term" value="C:nucleus"/>
    <property type="evidence" value="ECO:0000250"/>
    <property type="project" value="UniProtKB"/>
</dbReference>
<dbReference type="GO" id="GO:0010286">
    <property type="term" value="P:heat acclimation"/>
    <property type="evidence" value="ECO:0000250"/>
    <property type="project" value="UniProtKB"/>
</dbReference>
<dbReference type="GO" id="GO:0009408">
    <property type="term" value="P:response to heat"/>
    <property type="evidence" value="ECO:0000270"/>
    <property type="project" value="UniProtKB"/>
</dbReference>